<reference key="1">
    <citation type="journal article" date="2006" name="Proc. Natl. Acad. Sci. U.S.A.">
        <title>Multireplicon genome architecture of Lactobacillus salivarius.</title>
        <authorList>
            <person name="Claesson M.J."/>
            <person name="Li Y."/>
            <person name="Leahy S."/>
            <person name="Canchaya C."/>
            <person name="van Pijkeren J.P."/>
            <person name="Cerdeno-Tarraga A.M."/>
            <person name="Parkhill J."/>
            <person name="Flynn S."/>
            <person name="O'Sullivan G.C."/>
            <person name="Collins J.K."/>
            <person name="Higgins D."/>
            <person name="Shanahan F."/>
            <person name="Fitzgerald G.F."/>
            <person name="van Sinderen D."/>
            <person name="O'Toole P.W."/>
        </authorList>
    </citation>
    <scope>NUCLEOTIDE SEQUENCE [LARGE SCALE GENOMIC DNA]</scope>
    <source>
        <strain>UCC118</strain>
    </source>
</reference>
<keyword id="KW-1185">Reference proteome</keyword>
<keyword id="KW-0687">Ribonucleoprotein</keyword>
<keyword id="KW-0689">Ribosomal protein</keyword>
<keyword id="KW-0694">RNA-binding</keyword>
<keyword id="KW-0699">rRNA-binding</keyword>
<sequence>MSRIGYKVVNLPEGVEVKQDGNVVTVKGPKGELTREFSDKITIKVEGNEVSFERSAEDNKTKALHGTTRSNFHNMVVGVSEGFKKELELRGVGYRAQMKGKTLVLNVGYSHPVEFEEEEGITFETPSATSIIVSGINKEEVGDCAARIRATRAPEPYKGKGIRYVGEYVRRKEGKTGK</sequence>
<comment type="function">
    <text evidence="1">This protein binds to the 23S rRNA, and is important in its secondary structure. It is located near the subunit interface in the base of the L7/L12 stalk, and near the tRNA binding site of the peptidyltransferase center.</text>
</comment>
<comment type="subunit">
    <text evidence="1">Part of the 50S ribosomal subunit.</text>
</comment>
<comment type="similarity">
    <text evidence="1">Belongs to the universal ribosomal protein uL6 family.</text>
</comment>
<name>RL6_LIGS1</name>
<proteinExistence type="inferred from homology"/>
<feature type="chain" id="PRO_0000260883" description="Large ribosomal subunit protein uL6">
    <location>
        <begin position="1"/>
        <end position="178"/>
    </location>
</feature>
<dbReference type="EMBL" id="CP000233">
    <property type="protein sequence ID" value="ABE00224.1"/>
    <property type="molecule type" value="Genomic_DNA"/>
</dbReference>
<dbReference type="RefSeq" id="WP_003701323.1">
    <property type="nucleotide sequence ID" value="NC_007929.1"/>
</dbReference>
<dbReference type="RefSeq" id="YP_536307.1">
    <property type="nucleotide sequence ID" value="NC_007929.1"/>
</dbReference>
<dbReference type="SMR" id="Q1WSA5"/>
<dbReference type="STRING" id="362948.LSL_1420"/>
<dbReference type="GeneID" id="89466155"/>
<dbReference type="KEGG" id="lsl:LSL_1420"/>
<dbReference type="PATRIC" id="fig|362948.14.peg.1503"/>
<dbReference type="HOGENOM" id="CLU_065464_1_2_9"/>
<dbReference type="OrthoDB" id="9805007at2"/>
<dbReference type="Proteomes" id="UP000006559">
    <property type="component" value="Chromosome"/>
</dbReference>
<dbReference type="GO" id="GO:0022625">
    <property type="term" value="C:cytosolic large ribosomal subunit"/>
    <property type="evidence" value="ECO:0007669"/>
    <property type="project" value="TreeGrafter"/>
</dbReference>
<dbReference type="GO" id="GO:0019843">
    <property type="term" value="F:rRNA binding"/>
    <property type="evidence" value="ECO:0007669"/>
    <property type="project" value="UniProtKB-UniRule"/>
</dbReference>
<dbReference type="GO" id="GO:0003735">
    <property type="term" value="F:structural constituent of ribosome"/>
    <property type="evidence" value="ECO:0007669"/>
    <property type="project" value="InterPro"/>
</dbReference>
<dbReference type="GO" id="GO:0002181">
    <property type="term" value="P:cytoplasmic translation"/>
    <property type="evidence" value="ECO:0007669"/>
    <property type="project" value="TreeGrafter"/>
</dbReference>
<dbReference type="FunFam" id="3.90.930.12:FF:000001">
    <property type="entry name" value="50S ribosomal protein L6"/>
    <property type="match status" value="1"/>
</dbReference>
<dbReference type="FunFam" id="3.90.930.12:FF:000002">
    <property type="entry name" value="50S ribosomal protein L6"/>
    <property type="match status" value="1"/>
</dbReference>
<dbReference type="Gene3D" id="3.90.930.12">
    <property type="entry name" value="Ribosomal protein L6, alpha-beta domain"/>
    <property type="match status" value="2"/>
</dbReference>
<dbReference type="HAMAP" id="MF_01365_B">
    <property type="entry name" value="Ribosomal_uL6_B"/>
    <property type="match status" value="1"/>
</dbReference>
<dbReference type="InterPro" id="IPR000702">
    <property type="entry name" value="Ribosomal_uL6-like"/>
</dbReference>
<dbReference type="InterPro" id="IPR036789">
    <property type="entry name" value="Ribosomal_uL6-like_a/b-dom_sf"/>
</dbReference>
<dbReference type="InterPro" id="IPR020040">
    <property type="entry name" value="Ribosomal_uL6_a/b-dom"/>
</dbReference>
<dbReference type="InterPro" id="IPR019906">
    <property type="entry name" value="Ribosomal_uL6_bac-type"/>
</dbReference>
<dbReference type="InterPro" id="IPR002358">
    <property type="entry name" value="Ribosomal_uL6_CS"/>
</dbReference>
<dbReference type="NCBIfam" id="TIGR03654">
    <property type="entry name" value="L6_bact"/>
    <property type="match status" value="1"/>
</dbReference>
<dbReference type="PANTHER" id="PTHR11655">
    <property type="entry name" value="60S/50S RIBOSOMAL PROTEIN L6/L9"/>
    <property type="match status" value="1"/>
</dbReference>
<dbReference type="PANTHER" id="PTHR11655:SF14">
    <property type="entry name" value="LARGE RIBOSOMAL SUBUNIT PROTEIN UL6M"/>
    <property type="match status" value="1"/>
</dbReference>
<dbReference type="Pfam" id="PF00347">
    <property type="entry name" value="Ribosomal_L6"/>
    <property type="match status" value="2"/>
</dbReference>
<dbReference type="PIRSF" id="PIRSF002162">
    <property type="entry name" value="Ribosomal_L6"/>
    <property type="match status" value="1"/>
</dbReference>
<dbReference type="PRINTS" id="PR00059">
    <property type="entry name" value="RIBOSOMALL6"/>
</dbReference>
<dbReference type="SUPFAM" id="SSF56053">
    <property type="entry name" value="Ribosomal protein L6"/>
    <property type="match status" value="2"/>
</dbReference>
<dbReference type="PROSITE" id="PS00525">
    <property type="entry name" value="RIBOSOMAL_L6_1"/>
    <property type="match status" value="1"/>
</dbReference>
<protein>
    <recommendedName>
        <fullName evidence="1">Large ribosomal subunit protein uL6</fullName>
    </recommendedName>
    <alternativeName>
        <fullName evidence="2">50S ribosomal protein L6</fullName>
    </alternativeName>
</protein>
<organism>
    <name type="scientific">Ligilactobacillus salivarius (strain UCC118)</name>
    <name type="common">Lactobacillus salivarius</name>
    <dbReference type="NCBI Taxonomy" id="362948"/>
    <lineage>
        <taxon>Bacteria</taxon>
        <taxon>Bacillati</taxon>
        <taxon>Bacillota</taxon>
        <taxon>Bacilli</taxon>
        <taxon>Lactobacillales</taxon>
        <taxon>Lactobacillaceae</taxon>
        <taxon>Ligilactobacillus</taxon>
    </lineage>
</organism>
<evidence type="ECO:0000255" key="1">
    <source>
        <dbReference type="HAMAP-Rule" id="MF_01365"/>
    </source>
</evidence>
<evidence type="ECO:0000305" key="2"/>
<accession>Q1WSA5</accession>
<gene>
    <name evidence="1" type="primary">rplF</name>
    <name type="ordered locus">LSL_1420</name>
</gene>